<proteinExistence type="inferred from homology"/>
<evidence type="ECO:0000250" key="1">
    <source>
        <dbReference type="UniProtKB" id="Q2FXT0"/>
    </source>
</evidence>
<evidence type="ECO:0000255" key="2">
    <source>
        <dbReference type="HAMAP-Rule" id="MF_00539"/>
    </source>
</evidence>
<evidence type="ECO:0000256" key="3">
    <source>
        <dbReference type="SAM" id="MobiDB-lite"/>
    </source>
</evidence>
<evidence type="ECO:0000305" key="4"/>
<dbReference type="EMBL" id="CP000123">
    <property type="protein sequence ID" value="ABC01412.1"/>
    <property type="molecule type" value="Genomic_DNA"/>
</dbReference>
<dbReference type="RefSeq" id="WP_011387289.1">
    <property type="nucleotide sequence ID" value="NC_007633.1"/>
</dbReference>
<dbReference type="SMR" id="Q2SS74"/>
<dbReference type="GeneID" id="23778630"/>
<dbReference type="KEGG" id="mcp:MCAP_0414"/>
<dbReference type="HOGENOM" id="CLU_095424_4_0_14"/>
<dbReference type="PhylomeDB" id="Q2SS74"/>
<dbReference type="Proteomes" id="UP000001928">
    <property type="component" value="Chromosome"/>
</dbReference>
<dbReference type="GO" id="GO:0022625">
    <property type="term" value="C:cytosolic large ribosomal subunit"/>
    <property type="evidence" value="ECO:0007669"/>
    <property type="project" value="TreeGrafter"/>
</dbReference>
<dbReference type="GO" id="GO:0003735">
    <property type="term" value="F:structural constituent of ribosome"/>
    <property type="evidence" value="ECO:0007669"/>
    <property type="project" value="InterPro"/>
</dbReference>
<dbReference type="GO" id="GO:0006412">
    <property type="term" value="P:translation"/>
    <property type="evidence" value="ECO:0007669"/>
    <property type="project" value="UniProtKB-UniRule"/>
</dbReference>
<dbReference type="FunFam" id="2.40.50.100:FF:000004">
    <property type="entry name" value="50S ribosomal protein L27"/>
    <property type="match status" value="1"/>
</dbReference>
<dbReference type="Gene3D" id="2.40.50.100">
    <property type="match status" value="1"/>
</dbReference>
<dbReference type="HAMAP" id="MF_00539">
    <property type="entry name" value="Ribosomal_bL27"/>
    <property type="match status" value="1"/>
</dbReference>
<dbReference type="InterPro" id="IPR001684">
    <property type="entry name" value="Ribosomal_bL27"/>
</dbReference>
<dbReference type="InterPro" id="IPR018261">
    <property type="entry name" value="Ribosomal_bL27_CS"/>
</dbReference>
<dbReference type="NCBIfam" id="TIGR00062">
    <property type="entry name" value="L27"/>
    <property type="match status" value="1"/>
</dbReference>
<dbReference type="PANTHER" id="PTHR15893:SF0">
    <property type="entry name" value="LARGE RIBOSOMAL SUBUNIT PROTEIN BL27M"/>
    <property type="match status" value="1"/>
</dbReference>
<dbReference type="PANTHER" id="PTHR15893">
    <property type="entry name" value="RIBOSOMAL PROTEIN L27"/>
    <property type="match status" value="1"/>
</dbReference>
<dbReference type="Pfam" id="PF01016">
    <property type="entry name" value="Ribosomal_L27"/>
    <property type="match status" value="1"/>
</dbReference>
<dbReference type="PRINTS" id="PR00063">
    <property type="entry name" value="RIBOSOMALL27"/>
</dbReference>
<dbReference type="SUPFAM" id="SSF110324">
    <property type="entry name" value="Ribosomal L27 protein-like"/>
    <property type="match status" value="1"/>
</dbReference>
<dbReference type="PROSITE" id="PS00831">
    <property type="entry name" value="RIBOSOMAL_L27"/>
    <property type="match status" value="1"/>
</dbReference>
<accession>Q2SS74</accession>
<comment type="PTM">
    <text evidence="1">The N-terminus is cleaved by ribosomal processing cysteine protease Prp.</text>
</comment>
<comment type="similarity">
    <text evidence="2">Belongs to the bacterial ribosomal protein bL27 family.</text>
</comment>
<protein>
    <recommendedName>
        <fullName evidence="2">Large ribosomal subunit protein bL27</fullName>
    </recommendedName>
    <alternativeName>
        <fullName evidence="4">50S ribosomal protein L27</fullName>
    </alternativeName>
</protein>
<organism>
    <name type="scientific">Mycoplasma capricolum subsp. capricolum (strain California kid / ATCC 27343 / NCTC 10154)</name>
    <dbReference type="NCBI Taxonomy" id="340047"/>
    <lineage>
        <taxon>Bacteria</taxon>
        <taxon>Bacillati</taxon>
        <taxon>Mycoplasmatota</taxon>
        <taxon>Mollicutes</taxon>
        <taxon>Mycoplasmataceae</taxon>
        <taxon>Mycoplasma</taxon>
    </lineage>
</organism>
<name>RL27_MYCCT</name>
<reference key="1">
    <citation type="submission" date="2005-09" db="EMBL/GenBank/DDBJ databases">
        <authorList>
            <person name="Glass J.I."/>
            <person name="Lartigue C."/>
            <person name="Pfannkoch C."/>
            <person name="Baden-Tillson H."/>
            <person name="Smith H.O."/>
            <person name="Venter J.C."/>
            <person name="Roske K."/>
            <person name="Wise K.S."/>
            <person name="Calcutt M.J."/>
            <person name="Nelson W.C."/>
            <person name="Nierman W.C."/>
        </authorList>
    </citation>
    <scope>NUCLEOTIDE SEQUENCE [LARGE SCALE GENOMIC DNA]</scope>
    <source>
        <strain>California kid / ATCC 27343 / NCTC 10154</strain>
    </source>
</reference>
<keyword id="KW-0687">Ribonucleoprotein</keyword>
<keyword id="KW-0689">Ribosomal protein</keyword>
<feature type="propeptide" id="PRO_0000459915" evidence="1">
    <location>
        <begin position="1"/>
        <end position="10"/>
    </location>
</feature>
<feature type="chain" id="PRO_1000017518" description="Large ribosomal subunit protein bL27">
    <location>
        <begin position="11"/>
        <end position="93"/>
    </location>
</feature>
<feature type="region of interest" description="Disordered" evidence="3">
    <location>
        <begin position="14"/>
        <end position="36"/>
    </location>
</feature>
<feature type="compositionally biased region" description="Basic and acidic residues" evidence="3">
    <location>
        <begin position="21"/>
        <end position="36"/>
    </location>
</feature>
<gene>
    <name evidence="2" type="primary">rpmA</name>
    <name type="ordered locus">MCAP_0414</name>
</gene>
<sequence>MRFLLGLQYFASKKGVGSTKNGRDSESKRLGAKKSDGQFTNAGSIIYRQRGTKIHPGLNVGRGGDDTLFALISGIVKYEKFGKNRTRVSVIPN</sequence>